<reference key="1">
    <citation type="submission" date="2005-11" db="EMBL/GenBank/DDBJ databases">
        <title>NISC comparative sequencing initiative.</title>
        <authorList>
            <person name="Antonellis A."/>
            <person name="Ayele K."/>
            <person name="Benjamin B."/>
            <person name="Blakesley R.W."/>
            <person name="Boakye A."/>
            <person name="Bouffard G.G."/>
            <person name="Brinkley C."/>
            <person name="Brooks S."/>
            <person name="Chu G."/>
            <person name="Coleman H."/>
            <person name="Engle J."/>
            <person name="Gestole M."/>
            <person name="Greene A."/>
            <person name="Guan X."/>
            <person name="Gupta J."/>
            <person name="Haghighi P."/>
            <person name="Han J."/>
            <person name="Hansen N."/>
            <person name="Ho S.-L."/>
            <person name="Hu P."/>
            <person name="Hunter G."/>
            <person name="Hurle B."/>
            <person name="Idol J.R."/>
            <person name="Kwong P."/>
            <person name="Laric P."/>
            <person name="Larson S."/>
            <person name="Lee-Lin S.-Q."/>
            <person name="Legaspi R."/>
            <person name="Madden M."/>
            <person name="Maduro Q.L."/>
            <person name="Maduro V.B."/>
            <person name="Margulies E.H."/>
            <person name="Masiello C."/>
            <person name="Maskeri B."/>
            <person name="McDowell J."/>
            <person name="Mojidi H.A."/>
            <person name="Mullikin J.C."/>
            <person name="Oestreicher J.S."/>
            <person name="Park M."/>
            <person name="Portnoy M.E."/>
            <person name="Prasad A."/>
            <person name="Puri O."/>
            <person name="Reddix-Dugue N."/>
            <person name="Schandler K."/>
            <person name="Schueler M.G."/>
            <person name="Sison C."/>
            <person name="Stantripop S."/>
            <person name="Stephen E."/>
            <person name="Taye A."/>
            <person name="Thomas J.W."/>
            <person name="Thomas P.J."/>
            <person name="Tsipouri V."/>
            <person name="Ung L."/>
            <person name="Vogt J.L."/>
            <person name="Wetherby K.D."/>
            <person name="Young A."/>
            <person name="Green E.D."/>
        </authorList>
    </citation>
    <scope>NUCLEOTIDE SEQUENCE [LARGE SCALE GENOMIC DNA]</scope>
</reference>
<keyword id="KW-1003">Cell membrane</keyword>
<keyword id="KW-0333">Golgi apparatus</keyword>
<keyword id="KW-0472">Membrane</keyword>
<keyword id="KW-0597">Phosphoprotein</keyword>
<keyword id="KW-1185">Reference proteome</keyword>
<proteinExistence type="inferred from homology"/>
<sequence length="162" mass="18233">MGLETEKADVQLFLDDDSYSHHGDVDFADPEKFADSDHDRDPHRLNSHLKVGFEDVIAEPMTTHSCDKVWICSHALFEISKYVMYKFLTVFLAIPLAFVAGILFATLSCLHIWIIMPFVKTCLMVLPSVQTIWKSVTDVIIAPLCTSVGRSFSSISLQLSHD</sequence>
<protein>
    <recommendedName>
        <fullName>Caveolin-2</fullName>
    </recommendedName>
</protein>
<organism>
    <name type="scientific">Microcebus murinus</name>
    <name type="common">Gray mouse lemur</name>
    <name type="synonym">Lemur murinus</name>
    <dbReference type="NCBI Taxonomy" id="30608"/>
    <lineage>
        <taxon>Eukaryota</taxon>
        <taxon>Metazoa</taxon>
        <taxon>Chordata</taxon>
        <taxon>Craniata</taxon>
        <taxon>Vertebrata</taxon>
        <taxon>Euteleostomi</taxon>
        <taxon>Mammalia</taxon>
        <taxon>Eutheria</taxon>
        <taxon>Euarchontoglires</taxon>
        <taxon>Primates</taxon>
        <taxon>Strepsirrhini</taxon>
        <taxon>Lemuriformes</taxon>
        <taxon>Cheirogaleidae</taxon>
        <taxon>Microcebus</taxon>
    </lineage>
</organism>
<dbReference type="EMBL" id="DP000022">
    <property type="protein sequence ID" value="ABB89818.1"/>
    <property type="molecule type" value="Genomic_DNA"/>
</dbReference>
<dbReference type="RefSeq" id="XP_012616552.2">
    <property type="nucleotide sequence ID" value="XM_012761098.2"/>
</dbReference>
<dbReference type="SMR" id="Q2QL91"/>
<dbReference type="Ensembl" id="ENSMICT00000058158.1">
    <property type="protein sequence ID" value="ENSMICP00000045129.1"/>
    <property type="gene ID" value="ENSMICG00000045272.1"/>
</dbReference>
<dbReference type="GeneID" id="105869365"/>
<dbReference type="GeneTree" id="ENSGT00950000183006"/>
<dbReference type="HOGENOM" id="CLU_102582_2_0_1"/>
<dbReference type="OMA" id="TRIFMDD"/>
<dbReference type="OrthoDB" id="5917823at2759"/>
<dbReference type="TreeFam" id="TF315736"/>
<dbReference type="Proteomes" id="UP000694394">
    <property type="component" value="Chromosome 11"/>
</dbReference>
<dbReference type="GO" id="GO:0002080">
    <property type="term" value="C:acrosomal membrane"/>
    <property type="evidence" value="ECO:0007669"/>
    <property type="project" value="Ensembl"/>
</dbReference>
<dbReference type="GO" id="GO:0005901">
    <property type="term" value="C:caveola"/>
    <property type="evidence" value="ECO:0000250"/>
    <property type="project" value="UniProtKB"/>
</dbReference>
<dbReference type="GO" id="GO:0002095">
    <property type="term" value="C:caveolar macromolecular signaling complex"/>
    <property type="evidence" value="ECO:0007669"/>
    <property type="project" value="Ensembl"/>
</dbReference>
<dbReference type="GO" id="GO:0005925">
    <property type="term" value="C:focal adhesion"/>
    <property type="evidence" value="ECO:0007669"/>
    <property type="project" value="Ensembl"/>
</dbReference>
<dbReference type="GO" id="GO:0000139">
    <property type="term" value="C:Golgi membrane"/>
    <property type="evidence" value="ECO:0007669"/>
    <property type="project" value="UniProtKB-SubCell"/>
</dbReference>
<dbReference type="GO" id="GO:0048471">
    <property type="term" value="C:perinuclear region of cytoplasm"/>
    <property type="evidence" value="ECO:0000250"/>
    <property type="project" value="UniProtKB"/>
</dbReference>
<dbReference type="GO" id="GO:0044853">
    <property type="term" value="C:plasma membrane raft"/>
    <property type="evidence" value="ECO:0000250"/>
    <property type="project" value="UniProtKB"/>
</dbReference>
<dbReference type="GO" id="GO:0042383">
    <property type="term" value="C:sarcolemma"/>
    <property type="evidence" value="ECO:0007669"/>
    <property type="project" value="TreeGrafter"/>
</dbReference>
<dbReference type="GO" id="GO:0030133">
    <property type="term" value="C:transport vesicle"/>
    <property type="evidence" value="ECO:0007669"/>
    <property type="project" value="Ensembl"/>
</dbReference>
<dbReference type="GO" id="GO:0031748">
    <property type="term" value="F:D1 dopamine receptor binding"/>
    <property type="evidence" value="ECO:0000250"/>
    <property type="project" value="UniProtKB"/>
</dbReference>
<dbReference type="GO" id="GO:0046982">
    <property type="term" value="F:protein heterodimerization activity"/>
    <property type="evidence" value="ECO:0007669"/>
    <property type="project" value="Ensembl"/>
</dbReference>
<dbReference type="GO" id="GO:0042803">
    <property type="term" value="F:protein homodimerization activity"/>
    <property type="evidence" value="ECO:0007669"/>
    <property type="project" value="Ensembl"/>
</dbReference>
<dbReference type="GO" id="GO:0019901">
    <property type="term" value="F:protein kinase binding"/>
    <property type="evidence" value="ECO:0007669"/>
    <property type="project" value="Ensembl"/>
</dbReference>
<dbReference type="GO" id="GO:0030674">
    <property type="term" value="F:protein-macromolecule adaptor activity"/>
    <property type="evidence" value="ECO:0007669"/>
    <property type="project" value="Ensembl"/>
</dbReference>
<dbReference type="GO" id="GO:0097110">
    <property type="term" value="F:scaffold protein binding"/>
    <property type="evidence" value="ECO:0007669"/>
    <property type="project" value="Ensembl"/>
</dbReference>
<dbReference type="GO" id="GO:0071711">
    <property type="term" value="P:basement membrane organization"/>
    <property type="evidence" value="ECO:0007669"/>
    <property type="project" value="Ensembl"/>
</dbReference>
<dbReference type="GO" id="GO:0070836">
    <property type="term" value="P:caveola assembly"/>
    <property type="evidence" value="ECO:0000250"/>
    <property type="project" value="UniProtKB"/>
</dbReference>
<dbReference type="GO" id="GO:0007029">
    <property type="term" value="P:endoplasmic reticulum organization"/>
    <property type="evidence" value="ECO:0000250"/>
    <property type="project" value="UniProtKB"/>
</dbReference>
<dbReference type="GO" id="GO:0001935">
    <property type="term" value="P:endothelial cell proliferation"/>
    <property type="evidence" value="ECO:0007669"/>
    <property type="project" value="Ensembl"/>
</dbReference>
<dbReference type="GO" id="GO:0008286">
    <property type="term" value="P:insulin receptor signaling pathway"/>
    <property type="evidence" value="ECO:0007669"/>
    <property type="project" value="Ensembl"/>
</dbReference>
<dbReference type="GO" id="GO:0007005">
    <property type="term" value="P:mitochondrion organization"/>
    <property type="evidence" value="ECO:0000250"/>
    <property type="project" value="UniProtKB"/>
</dbReference>
<dbReference type="GO" id="GO:0001937">
    <property type="term" value="P:negative regulation of endothelial cell proliferation"/>
    <property type="evidence" value="ECO:0000250"/>
    <property type="project" value="UniProtKB"/>
</dbReference>
<dbReference type="GO" id="GO:0014859">
    <property type="term" value="P:negative regulation of skeletal muscle cell proliferation"/>
    <property type="evidence" value="ECO:0007669"/>
    <property type="project" value="Ensembl"/>
</dbReference>
<dbReference type="GO" id="GO:0030512">
    <property type="term" value="P:negative regulation of transforming growth factor beta receptor signaling pathway"/>
    <property type="evidence" value="ECO:0007669"/>
    <property type="project" value="Ensembl"/>
</dbReference>
<dbReference type="GO" id="GO:0044794">
    <property type="term" value="P:positive regulation by host of viral process"/>
    <property type="evidence" value="ECO:0007669"/>
    <property type="project" value="Ensembl"/>
</dbReference>
<dbReference type="GO" id="GO:0060161">
    <property type="term" value="P:positive regulation of dopamine receptor signaling pathway"/>
    <property type="evidence" value="ECO:0000250"/>
    <property type="project" value="UniProtKB"/>
</dbReference>
<dbReference type="GO" id="GO:0001938">
    <property type="term" value="P:positive regulation of endothelial cell proliferation"/>
    <property type="evidence" value="ECO:0007669"/>
    <property type="project" value="Ensembl"/>
</dbReference>
<dbReference type="GO" id="GO:0043410">
    <property type="term" value="P:positive regulation of MAPK cascade"/>
    <property type="evidence" value="ECO:0007669"/>
    <property type="project" value="Ensembl"/>
</dbReference>
<dbReference type="GO" id="GO:0019065">
    <property type="term" value="P:receptor-mediated endocytosis of virus by host cell"/>
    <property type="evidence" value="ECO:0007669"/>
    <property type="project" value="Ensembl"/>
</dbReference>
<dbReference type="GO" id="GO:0051480">
    <property type="term" value="P:regulation of cytosolic calcium ion concentration"/>
    <property type="evidence" value="ECO:0007669"/>
    <property type="project" value="TreeGrafter"/>
</dbReference>
<dbReference type="GO" id="GO:0007088">
    <property type="term" value="P:regulation of mitotic nuclear division"/>
    <property type="evidence" value="ECO:0007669"/>
    <property type="project" value="Ensembl"/>
</dbReference>
<dbReference type="GO" id="GO:0014856">
    <property type="term" value="P:skeletal muscle cell proliferation"/>
    <property type="evidence" value="ECO:0007669"/>
    <property type="project" value="Ensembl"/>
</dbReference>
<dbReference type="GO" id="GO:0048741">
    <property type="term" value="P:skeletal muscle fiber development"/>
    <property type="evidence" value="ECO:0000250"/>
    <property type="project" value="UniProtKB"/>
</dbReference>
<dbReference type="GO" id="GO:0007179">
    <property type="term" value="P:transforming growth factor beta receptor signaling pathway"/>
    <property type="evidence" value="ECO:0007669"/>
    <property type="project" value="Ensembl"/>
</dbReference>
<dbReference type="GO" id="GO:0048278">
    <property type="term" value="P:vesicle docking"/>
    <property type="evidence" value="ECO:0000250"/>
    <property type="project" value="UniProtKB"/>
</dbReference>
<dbReference type="GO" id="GO:0006906">
    <property type="term" value="P:vesicle fusion"/>
    <property type="evidence" value="ECO:0000250"/>
    <property type="project" value="UniProtKB"/>
</dbReference>
<dbReference type="GO" id="GO:0019076">
    <property type="term" value="P:viral release from host cell"/>
    <property type="evidence" value="ECO:0007669"/>
    <property type="project" value="Ensembl"/>
</dbReference>
<dbReference type="InterPro" id="IPR001612">
    <property type="entry name" value="Caveolin"/>
</dbReference>
<dbReference type="InterPro" id="IPR018361">
    <property type="entry name" value="Caveolin_CS"/>
</dbReference>
<dbReference type="PANTHER" id="PTHR10844">
    <property type="entry name" value="CAVEOLIN"/>
    <property type="match status" value="1"/>
</dbReference>
<dbReference type="PANTHER" id="PTHR10844:SF3">
    <property type="entry name" value="CAVEOLIN-2"/>
    <property type="match status" value="1"/>
</dbReference>
<dbReference type="Pfam" id="PF01146">
    <property type="entry name" value="Caveolin"/>
    <property type="match status" value="1"/>
</dbReference>
<dbReference type="PROSITE" id="PS01210">
    <property type="entry name" value="CAVEOLIN"/>
    <property type="match status" value="1"/>
</dbReference>
<feature type="chain" id="PRO_0000226341" description="Caveolin-2">
    <location>
        <begin position="1"/>
        <end position="162"/>
    </location>
</feature>
<feature type="topological domain" description="Cytoplasmic" evidence="4">
    <location>
        <begin position="1"/>
        <end position="86"/>
    </location>
</feature>
<feature type="intramembrane region" description="Helical" evidence="4">
    <location>
        <begin position="87"/>
        <end position="107"/>
    </location>
</feature>
<feature type="topological domain" description="Cytoplasmic" evidence="4">
    <location>
        <begin position="108"/>
        <end position="162"/>
    </location>
</feature>
<feature type="modified residue" description="Phosphotyrosine" evidence="2">
    <location>
        <position position="19"/>
    </location>
</feature>
<feature type="modified residue" description="Phosphoserine" evidence="3">
    <location>
        <position position="20"/>
    </location>
</feature>
<feature type="modified residue" description="Phosphoserine" evidence="2">
    <location>
        <position position="36"/>
    </location>
</feature>
<evidence type="ECO:0000250" key="1"/>
<evidence type="ECO:0000250" key="2">
    <source>
        <dbReference type="UniProtKB" id="P51636"/>
    </source>
</evidence>
<evidence type="ECO:0000250" key="3">
    <source>
        <dbReference type="UniProtKB" id="Q9WVC3"/>
    </source>
</evidence>
<evidence type="ECO:0000255" key="4"/>
<evidence type="ECO:0000305" key="5"/>
<name>CAV2_MICMU</name>
<comment type="function">
    <text evidence="1">May act as a scaffolding protein within caveolar membranes. Interacts directly with G-protein alpha subunits and can functionally regulate their activity. Caveolin-2 may function as an accessory protein in conjunction with caveolin-1 (By similarity).</text>
</comment>
<comment type="subunit">
    <text evidence="1">Homodimer. Caveolin-1 and -2 colocalize and form a stable hetero-oligomeric complex (By similarity).</text>
</comment>
<comment type="subcellular location">
    <subcellularLocation>
        <location evidence="1">Golgi apparatus membrane</location>
        <topology evidence="1">Peripheral membrane protein</topology>
    </subcellularLocation>
    <subcellularLocation>
        <location evidence="1">Cell membrane</location>
        <topology evidence="1">Peripheral membrane protein</topology>
    </subcellularLocation>
    <subcellularLocation>
        <location evidence="1">Membrane</location>
        <location evidence="1">Caveola</location>
        <topology evidence="1">Peripheral membrane protein</topology>
    </subcellularLocation>
    <text evidence="1">Potential hairpin-like structure in the membrane. Membrane protein of caveolae (By similarity).</text>
</comment>
<comment type="similarity">
    <text evidence="5">Belongs to the caveolin family.</text>
</comment>
<accession>Q2QL91</accession>
<gene>
    <name type="primary">CAV2</name>
</gene>